<evidence type="ECO:0000250" key="1"/>
<evidence type="ECO:0000255" key="2"/>
<evidence type="ECO:0000269" key="3">
    <source>
    </source>
</evidence>
<evidence type="ECO:0000305" key="4"/>
<accession>P05029</accession>
<dbReference type="EMBL" id="X03471">
    <property type="protein sequence ID" value="CAA27188.1"/>
    <property type="molecule type" value="mRNA"/>
</dbReference>
<dbReference type="PIR" id="A23625">
    <property type="entry name" value="PWRYNB"/>
</dbReference>
<dbReference type="PIR" id="A33291">
    <property type="entry name" value="A33291"/>
</dbReference>
<dbReference type="SMR" id="P05029"/>
<dbReference type="GlyCosmos" id="P05029">
    <property type="glycosylation" value="4 sites, No reported glycans"/>
</dbReference>
<dbReference type="GO" id="GO:0005890">
    <property type="term" value="C:sodium:potassium-exchanging ATPase complex"/>
    <property type="evidence" value="ECO:0007669"/>
    <property type="project" value="InterPro"/>
</dbReference>
<dbReference type="GO" id="GO:0001671">
    <property type="term" value="F:ATPase activator activity"/>
    <property type="evidence" value="ECO:0007669"/>
    <property type="project" value="TreeGrafter"/>
</dbReference>
<dbReference type="GO" id="GO:0030007">
    <property type="term" value="P:intracellular potassium ion homeostasis"/>
    <property type="evidence" value="ECO:0007669"/>
    <property type="project" value="TreeGrafter"/>
</dbReference>
<dbReference type="GO" id="GO:0006883">
    <property type="term" value="P:intracellular sodium ion homeostasis"/>
    <property type="evidence" value="ECO:0007669"/>
    <property type="project" value="TreeGrafter"/>
</dbReference>
<dbReference type="GO" id="GO:1990573">
    <property type="term" value="P:potassium ion import across plasma membrane"/>
    <property type="evidence" value="ECO:0007669"/>
    <property type="project" value="TreeGrafter"/>
</dbReference>
<dbReference type="GO" id="GO:0036376">
    <property type="term" value="P:sodium ion export across plasma membrane"/>
    <property type="evidence" value="ECO:0007669"/>
    <property type="project" value="TreeGrafter"/>
</dbReference>
<dbReference type="FunFam" id="1.20.5.170:FF:000062">
    <property type="entry name" value="Sodium/potassium-transporting ATPase subunit beta"/>
    <property type="match status" value="1"/>
</dbReference>
<dbReference type="FunFam" id="2.60.40.1660:FF:000002">
    <property type="entry name" value="Sodium/potassium-transporting ATPase subunit beta"/>
    <property type="match status" value="1"/>
</dbReference>
<dbReference type="Gene3D" id="1.20.5.170">
    <property type="match status" value="1"/>
</dbReference>
<dbReference type="Gene3D" id="2.60.40.1660">
    <property type="entry name" value="Na, k-atpase alpha subunit"/>
    <property type="match status" value="1"/>
</dbReference>
<dbReference type="InterPro" id="IPR000402">
    <property type="entry name" value="Na/K_ATPase_sub_beta"/>
</dbReference>
<dbReference type="InterPro" id="IPR038702">
    <property type="entry name" value="Na/K_ATPase_sub_beta_sf"/>
</dbReference>
<dbReference type="NCBIfam" id="TIGR01107">
    <property type="entry name" value="Na_K_ATPase_bet"/>
    <property type="match status" value="1"/>
</dbReference>
<dbReference type="PANTHER" id="PTHR11523">
    <property type="entry name" value="SODIUM/POTASSIUM-DEPENDENT ATPASE BETA SUBUNIT"/>
    <property type="match status" value="1"/>
</dbReference>
<dbReference type="PANTHER" id="PTHR11523:SF10">
    <property type="entry name" value="SODIUM_POTASSIUM-TRANSPORTING ATPASE SUBUNIT BETA-1"/>
    <property type="match status" value="1"/>
</dbReference>
<dbReference type="Pfam" id="PF00287">
    <property type="entry name" value="Na_K-ATPase"/>
    <property type="match status" value="1"/>
</dbReference>
<dbReference type="PROSITE" id="PS00390">
    <property type="entry name" value="ATPASE_NA_K_BETA_1"/>
    <property type="match status" value="1"/>
</dbReference>
<dbReference type="PROSITE" id="PS00391">
    <property type="entry name" value="ATPASE_NA_K_BETA_2"/>
    <property type="match status" value="1"/>
</dbReference>
<protein>
    <recommendedName>
        <fullName>Sodium/potassium-transporting ATPase subunit beta-1</fullName>
    </recommendedName>
    <alternativeName>
        <fullName>Sodium/potassium-dependent ATPase subunit beta-1</fullName>
    </alternativeName>
</protein>
<sequence>MAREKSTDDGGGWKKFLWDSEKKQVLGRTGTSWFKIFVFYLIFYGCLAGIFIGTIQVMLLTISDFEPKYQDRVAPPGLSHSPYAVKTEISFSVSNPNSYENHVNGLKELLKNYNESKQDGNTPFEDCGVIPADYITRGPIEESQGQKRVCRFLLQWLKNCSGIDDPSYGYSEGKPCIIAKLNRILGFYPKPPKNGTDLPEALQANYNQYVLPIHCQAKKEEDKVRIGTIEYFGMGGVGGFPLQYYPYYGKRLQKNYLQPLVGIQFTNLTHNVELRVECKVFGDNIAYSEKDRSLGRFEVKIEVKS</sequence>
<organism>
    <name type="scientific">Tetronarce californica</name>
    <name type="common">Pacific electric ray</name>
    <name type="synonym">Torpedo californica</name>
    <dbReference type="NCBI Taxonomy" id="7787"/>
    <lineage>
        <taxon>Eukaryota</taxon>
        <taxon>Metazoa</taxon>
        <taxon>Chordata</taxon>
        <taxon>Craniata</taxon>
        <taxon>Vertebrata</taxon>
        <taxon>Chondrichthyes</taxon>
        <taxon>Elasmobranchii</taxon>
        <taxon>Batoidea</taxon>
        <taxon>Torpediniformes</taxon>
        <taxon>Torpedinidae</taxon>
        <taxon>Tetronarce</taxon>
    </lineage>
</organism>
<name>AT1B1_TETCF</name>
<keyword id="KW-1003">Cell membrane</keyword>
<keyword id="KW-1015">Disulfide bond</keyword>
<keyword id="KW-0325">Glycoprotein</keyword>
<keyword id="KW-0406">Ion transport</keyword>
<keyword id="KW-0472">Membrane</keyword>
<keyword id="KW-0630">Potassium</keyword>
<keyword id="KW-0633">Potassium transport</keyword>
<keyword id="KW-0735">Signal-anchor</keyword>
<keyword id="KW-0915">Sodium</keyword>
<keyword id="KW-0739">Sodium transport</keyword>
<keyword id="KW-0740">Sodium/potassium transport</keyword>
<keyword id="KW-0812">Transmembrane</keyword>
<keyword id="KW-1133">Transmembrane helix</keyword>
<keyword id="KW-0813">Transport</keyword>
<comment type="function">
    <text>This is the non-catalytic component of the active enzyme, which catalyzes the hydrolysis of ATP coupled with the exchange of Na(+) and K(+) ions across the plasma membrane. The beta subunit regulates, through assembly of alpha/beta heterodimers, the number of sodium pumps transported to the plasma membrane.</text>
</comment>
<comment type="subunit">
    <text evidence="4">The sodium/potassium-transporting ATPase is composed of a catalytic alpha subunit, an auxiliary non-catalytic beta subunit and an additional regulatory subunit.</text>
</comment>
<comment type="subcellular location">
    <subcellularLocation>
        <location evidence="4">Cell membrane</location>
        <topology>Single-pass type II membrane protein</topology>
    </subcellularLocation>
</comment>
<comment type="similarity">
    <text evidence="4">Belongs to the X(+)/potassium ATPases subunit beta family.</text>
</comment>
<gene>
    <name type="primary">atp1b1</name>
</gene>
<reference key="1">
    <citation type="journal article" date="1986" name="FEBS Lett.">
        <title>Primary structure of the beta-subunit of Torpedo californica (Na+ + K+)-ATPase deduced from the cDNA sequence.</title>
        <authorList>
            <person name="Noguchi S."/>
            <person name="Noda M."/>
            <person name="Takahashi H."/>
            <person name="Kawakami K."/>
            <person name="Ohta T."/>
            <person name="Nagano K."/>
            <person name="Hirose T."/>
            <person name="Inayama S."/>
            <person name="Kawamura M."/>
            <person name="Numa S."/>
        </authorList>
    </citation>
    <scope>NUCLEOTIDE SEQUENCE [MRNA]</scope>
</reference>
<reference key="2">
    <citation type="journal article" date="1989" name="Biochem. Biophys. Res. Commun.">
        <title>Identification of a disulfide between cysteine 214 and cysteine 277 in the beta subunit of native (Na+ + K+)ATPase.</title>
        <authorList>
            <person name="Kellaris K.V."/>
        </authorList>
    </citation>
    <scope>DISULFIDE BOND 215-CYS--CYS-278</scope>
</reference>
<feature type="chain" id="PRO_0000219116" description="Sodium/potassium-transporting ATPase subunit beta-1">
    <location>
        <begin position="1"/>
        <end position="305"/>
    </location>
</feature>
<feature type="topological domain" description="Cytoplasmic" evidence="2">
    <location>
        <begin position="1"/>
        <end position="32"/>
    </location>
</feature>
<feature type="transmembrane region" description="Helical; Signal-anchor for type II membrane protein" evidence="2">
    <location>
        <begin position="33"/>
        <end position="53"/>
    </location>
</feature>
<feature type="topological domain" description="Extracellular" evidence="2">
    <location>
        <begin position="54"/>
        <end position="305"/>
    </location>
</feature>
<feature type="glycosylation site" description="N-linked (GlcNAc...) asparagine" evidence="2">
    <location>
        <position position="114"/>
    </location>
</feature>
<feature type="glycosylation site" description="N-linked (GlcNAc...) asparagine" evidence="1">
    <location>
        <position position="159"/>
    </location>
</feature>
<feature type="glycosylation site" description="N-linked (GlcNAc...) asparagine" evidence="1">
    <location>
        <position position="194"/>
    </location>
</feature>
<feature type="glycosylation site" description="N-linked (GlcNAc...) asparagine" evidence="1">
    <location>
        <position position="267"/>
    </location>
</feature>
<feature type="disulfide bond" evidence="1">
    <location>
        <begin position="127"/>
        <end position="150"/>
    </location>
</feature>
<feature type="disulfide bond" evidence="1">
    <location>
        <begin position="160"/>
        <end position="176"/>
    </location>
</feature>
<feature type="disulfide bond" evidence="3">
    <location>
        <begin position="215"/>
        <end position="278"/>
    </location>
</feature>
<proteinExistence type="evidence at protein level"/>